<gene>
    <name evidence="1" type="primary">tmk</name>
    <name type="ordered locus">gbs1626</name>
</gene>
<feature type="chain" id="PRO_0000155346" description="Thymidylate kinase">
    <location>
        <begin position="1"/>
        <end position="211"/>
    </location>
</feature>
<feature type="binding site" evidence="1">
    <location>
        <begin position="11"/>
        <end position="18"/>
    </location>
    <ligand>
        <name>ATP</name>
        <dbReference type="ChEBI" id="CHEBI:30616"/>
    </ligand>
</feature>
<keyword id="KW-0067">ATP-binding</keyword>
<keyword id="KW-0418">Kinase</keyword>
<keyword id="KW-0545">Nucleotide biosynthesis</keyword>
<keyword id="KW-0547">Nucleotide-binding</keyword>
<keyword id="KW-0808">Transferase</keyword>
<evidence type="ECO:0000255" key="1">
    <source>
        <dbReference type="HAMAP-Rule" id="MF_00165"/>
    </source>
</evidence>
<protein>
    <recommendedName>
        <fullName evidence="1">Thymidylate kinase</fullName>
        <ecNumber evidence="1">2.7.4.9</ecNumber>
    </recommendedName>
    <alternativeName>
        <fullName evidence="1">dTMP kinase</fullName>
    </alternativeName>
</protein>
<sequence length="211" mass="24019">MKKGLMISFEGPDGAGKTTVLEAVLPLLREKLSQDILTTREPGGVTISEEIRHIILDVKHTQMDKKTELLLYMAARRQHLVEKVLPALEEGKIVLMDRFIDSSVAYQGSGRGLDKSHIKWLNDYATDSHKPDLTLYFDVPSEVGLERIQKSVQREVNRLDLEQLDMHQRVRQGYLELADSEPNRIVTIDASQQLDEVIAETFSIILDRINQ</sequence>
<accession>Q8E3X8</accession>
<dbReference type="EC" id="2.7.4.9" evidence="1"/>
<dbReference type="EMBL" id="AL766852">
    <property type="protein sequence ID" value="CAD47285.1"/>
    <property type="molecule type" value="Genomic_DNA"/>
</dbReference>
<dbReference type="RefSeq" id="WP_000715592.1">
    <property type="nucleotide sequence ID" value="NC_004368.1"/>
</dbReference>
<dbReference type="SMR" id="Q8E3X8"/>
<dbReference type="GeneID" id="66886422"/>
<dbReference type="KEGG" id="san:gbs1626"/>
<dbReference type="eggNOG" id="COG0125">
    <property type="taxonomic scope" value="Bacteria"/>
</dbReference>
<dbReference type="HOGENOM" id="CLU_049131_0_2_9"/>
<dbReference type="Proteomes" id="UP000000823">
    <property type="component" value="Chromosome"/>
</dbReference>
<dbReference type="GO" id="GO:0005829">
    <property type="term" value="C:cytosol"/>
    <property type="evidence" value="ECO:0007669"/>
    <property type="project" value="TreeGrafter"/>
</dbReference>
<dbReference type="GO" id="GO:0005524">
    <property type="term" value="F:ATP binding"/>
    <property type="evidence" value="ECO:0007669"/>
    <property type="project" value="UniProtKB-UniRule"/>
</dbReference>
<dbReference type="GO" id="GO:0004798">
    <property type="term" value="F:dTMP kinase activity"/>
    <property type="evidence" value="ECO:0007669"/>
    <property type="project" value="UniProtKB-UniRule"/>
</dbReference>
<dbReference type="GO" id="GO:0006233">
    <property type="term" value="P:dTDP biosynthetic process"/>
    <property type="evidence" value="ECO:0007669"/>
    <property type="project" value="InterPro"/>
</dbReference>
<dbReference type="GO" id="GO:0006235">
    <property type="term" value="P:dTTP biosynthetic process"/>
    <property type="evidence" value="ECO:0007669"/>
    <property type="project" value="UniProtKB-UniRule"/>
</dbReference>
<dbReference type="GO" id="GO:0006227">
    <property type="term" value="P:dUDP biosynthetic process"/>
    <property type="evidence" value="ECO:0007669"/>
    <property type="project" value="TreeGrafter"/>
</dbReference>
<dbReference type="CDD" id="cd01672">
    <property type="entry name" value="TMPK"/>
    <property type="match status" value="1"/>
</dbReference>
<dbReference type="FunFam" id="3.40.50.300:FF:000225">
    <property type="entry name" value="Thymidylate kinase"/>
    <property type="match status" value="1"/>
</dbReference>
<dbReference type="Gene3D" id="3.40.50.300">
    <property type="entry name" value="P-loop containing nucleotide triphosphate hydrolases"/>
    <property type="match status" value="1"/>
</dbReference>
<dbReference type="HAMAP" id="MF_00165">
    <property type="entry name" value="Thymidylate_kinase"/>
    <property type="match status" value="1"/>
</dbReference>
<dbReference type="InterPro" id="IPR027417">
    <property type="entry name" value="P-loop_NTPase"/>
</dbReference>
<dbReference type="InterPro" id="IPR039430">
    <property type="entry name" value="Thymidylate_kin-like_dom"/>
</dbReference>
<dbReference type="InterPro" id="IPR018095">
    <property type="entry name" value="Thymidylate_kin_CS"/>
</dbReference>
<dbReference type="InterPro" id="IPR018094">
    <property type="entry name" value="Thymidylate_kinase"/>
</dbReference>
<dbReference type="NCBIfam" id="TIGR00041">
    <property type="entry name" value="DTMP_kinase"/>
    <property type="match status" value="1"/>
</dbReference>
<dbReference type="PANTHER" id="PTHR10344">
    <property type="entry name" value="THYMIDYLATE KINASE"/>
    <property type="match status" value="1"/>
</dbReference>
<dbReference type="PANTHER" id="PTHR10344:SF4">
    <property type="entry name" value="UMP-CMP KINASE 2, MITOCHONDRIAL"/>
    <property type="match status" value="1"/>
</dbReference>
<dbReference type="Pfam" id="PF02223">
    <property type="entry name" value="Thymidylate_kin"/>
    <property type="match status" value="1"/>
</dbReference>
<dbReference type="SUPFAM" id="SSF52540">
    <property type="entry name" value="P-loop containing nucleoside triphosphate hydrolases"/>
    <property type="match status" value="1"/>
</dbReference>
<dbReference type="PROSITE" id="PS01331">
    <property type="entry name" value="THYMIDYLATE_KINASE"/>
    <property type="match status" value="1"/>
</dbReference>
<reference key="1">
    <citation type="journal article" date="2002" name="Mol. Microbiol.">
        <title>Genome sequence of Streptococcus agalactiae, a pathogen causing invasive neonatal disease.</title>
        <authorList>
            <person name="Glaser P."/>
            <person name="Rusniok C."/>
            <person name="Buchrieser C."/>
            <person name="Chevalier F."/>
            <person name="Frangeul L."/>
            <person name="Msadek T."/>
            <person name="Zouine M."/>
            <person name="Couve E."/>
            <person name="Lalioui L."/>
            <person name="Poyart C."/>
            <person name="Trieu-Cuot P."/>
            <person name="Kunst F."/>
        </authorList>
    </citation>
    <scope>NUCLEOTIDE SEQUENCE [LARGE SCALE GENOMIC DNA]</scope>
    <source>
        <strain>NEM316</strain>
    </source>
</reference>
<name>KTHY_STRA3</name>
<comment type="function">
    <text evidence="1">Phosphorylation of dTMP to form dTDP in both de novo and salvage pathways of dTTP synthesis.</text>
</comment>
<comment type="catalytic activity">
    <reaction evidence="1">
        <text>dTMP + ATP = dTDP + ADP</text>
        <dbReference type="Rhea" id="RHEA:13517"/>
        <dbReference type="ChEBI" id="CHEBI:30616"/>
        <dbReference type="ChEBI" id="CHEBI:58369"/>
        <dbReference type="ChEBI" id="CHEBI:63528"/>
        <dbReference type="ChEBI" id="CHEBI:456216"/>
        <dbReference type="EC" id="2.7.4.9"/>
    </reaction>
</comment>
<comment type="similarity">
    <text evidence="1">Belongs to the thymidylate kinase family.</text>
</comment>
<proteinExistence type="inferred from homology"/>
<organism>
    <name type="scientific">Streptococcus agalactiae serotype III (strain NEM316)</name>
    <dbReference type="NCBI Taxonomy" id="211110"/>
    <lineage>
        <taxon>Bacteria</taxon>
        <taxon>Bacillati</taxon>
        <taxon>Bacillota</taxon>
        <taxon>Bacilli</taxon>
        <taxon>Lactobacillales</taxon>
        <taxon>Streptococcaceae</taxon>
        <taxon>Streptococcus</taxon>
    </lineage>
</organism>